<comment type="catalytic activity">
    <reaction evidence="1">
        <text>tRNA(Phe) + L-phenylalanine + ATP = L-phenylalanyl-tRNA(Phe) + AMP + diphosphate + H(+)</text>
        <dbReference type="Rhea" id="RHEA:19413"/>
        <dbReference type="Rhea" id="RHEA-COMP:9668"/>
        <dbReference type="Rhea" id="RHEA-COMP:9699"/>
        <dbReference type="ChEBI" id="CHEBI:15378"/>
        <dbReference type="ChEBI" id="CHEBI:30616"/>
        <dbReference type="ChEBI" id="CHEBI:33019"/>
        <dbReference type="ChEBI" id="CHEBI:58095"/>
        <dbReference type="ChEBI" id="CHEBI:78442"/>
        <dbReference type="ChEBI" id="CHEBI:78531"/>
        <dbReference type="ChEBI" id="CHEBI:456215"/>
        <dbReference type="EC" id="6.1.1.20"/>
    </reaction>
</comment>
<comment type="cofactor">
    <cofactor evidence="1">
        <name>Mg(2+)</name>
        <dbReference type="ChEBI" id="CHEBI:18420"/>
    </cofactor>
    <text evidence="1">Binds 2 magnesium ions per tetramer.</text>
</comment>
<comment type="subunit">
    <text evidence="1">Tetramer of two alpha and two beta subunits.</text>
</comment>
<comment type="subcellular location">
    <subcellularLocation>
        <location evidence="1">Cytoplasm</location>
    </subcellularLocation>
</comment>
<comment type="similarity">
    <text evidence="1">Belongs to the class-II aminoacyl-tRNA synthetase family. Phe-tRNA synthetase alpha subunit type 1 subfamily.</text>
</comment>
<name>SYFA_MOOTA</name>
<proteinExistence type="inferred from homology"/>
<reference key="1">
    <citation type="journal article" date="2008" name="Environ. Microbiol.">
        <title>The complete genome sequence of Moorella thermoacetica (f. Clostridium thermoaceticum).</title>
        <authorList>
            <person name="Pierce E."/>
            <person name="Xie G."/>
            <person name="Barabote R.D."/>
            <person name="Saunders E."/>
            <person name="Han C.S."/>
            <person name="Detter J.C."/>
            <person name="Richardson P."/>
            <person name="Brettin T.S."/>
            <person name="Das A."/>
            <person name="Ljungdahl L.G."/>
            <person name="Ragsdale S.W."/>
        </authorList>
    </citation>
    <scope>NUCLEOTIDE SEQUENCE [LARGE SCALE GENOMIC DNA]</scope>
    <source>
        <strain>ATCC 39073 / JCM 9320</strain>
    </source>
</reference>
<organism>
    <name type="scientific">Moorella thermoacetica (strain ATCC 39073 / JCM 9320)</name>
    <dbReference type="NCBI Taxonomy" id="264732"/>
    <lineage>
        <taxon>Bacteria</taxon>
        <taxon>Bacillati</taxon>
        <taxon>Bacillota</taxon>
        <taxon>Clostridia</taxon>
        <taxon>Moorellales</taxon>
        <taxon>Moorellaceae</taxon>
        <taxon>Moorella</taxon>
    </lineage>
</organism>
<gene>
    <name evidence="1" type="primary">pheS</name>
    <name type="ordered locus">Moth_1751</name>
</gene>
<protein>
    <recommendedName>
        <fullName evidence="1">Phenylalanine--tRNA ligase alpha subunit</fullName>
        <ecNumber evidence="1">6.1.1.20</ecNumber>
    </recommendedName>
    <alternativeName>
        <fullName evidence="1">Phenylalanyl-tRNA synthetase alpha subunit</fullName>
        <shortName evidence="1">PheRS</shortName>
    </alternativeName>
</protein>
<sequence length="340" mass="38649">MLEVIAKIREEALARVAAATSSEELEALRVRYLGKKGELTRVLRGMGKLPPEERPRVGQMANKVREELEGALKEHRENLSRREQAERLRAEALDVTLPGRPVTRGNRHPLYQILNEIKAVFIGLGFDVAEGPEVESDYYNFEALNLPKEHPARDMQDSFYITEDVLLRTHTSPVQVRVMEARHPQLPIRIIAPGKVYRRDDDATHSPLFHQVEGLLVDRRVTFGDLKGTLMAFLKQMFGEQVRVRFRPSYFPFTEPSAEVDMSCVMCGGSGCRVCSHTGWLEILGCGMVHPKVLSMSGYDPEEVSGFAFGLGVERVAMLKYGIDDLRLFYENDLRFLRQF</sequence>
<accession>Q2RHN7</accession>
<dbReference type="EC" id="6.1.1.20" evidence="1"/>
<dbReference type="EMBL" id="CP000232">
    <property type="protein sequence ID" value="ABC20052.1"/>
    <property type="molecule type" value="Genomic_DNA"/>
</dbReference>
<dbReference type="RefSeq" id="YP_430595.1">
    <property type="nucleotide sequence ID" value="NC_007644.1"/>
</dbReference>
<dbReference type="SMR" id="Q2RHN7"/>
<dbReference type="STRING" id="264732.Moth_1751"/>
<dbReference type="EnsemblBacteria" id="ABC20052">
    <property type="protein sequence ID" value="ABC20052"/>
    <property type="gene ID" value="Moth_1751"/>
</dbReference>
<dbReference type="KEGG" id="mta:Moth_1751"/>
<dbReference type="PATRIC" id="fig|264732.11.peg.1901"/>
<dbReference type="eggNOG" id="COG0016">
    <property type="taxonomic scope" value="Bacteria"/>
</dbReference>
<dbReference type="HOGENOM" id="CLU_025086_0_1_9"/>
<dbReference type="OrthoDB" id="9800719at2"/>
<dbReference type="GO" id="GO:0005737">
    <property type="term" value="C:cytoplasm"/>
    <property type="evidence" value="ECO:0007669"/>
    <property type="project" value="UniProtKB-SubCell"/>
</dbReference>
<dbReference type="GO" id="GO:0005524">
    <property type="term" value="F:ATP binding"/>
    <property type="evidence" value="ECO:0007669"/>
    <property type="project" value="UniProtKB-UniRule"/>
</dbReference>
<dbReference type="GO" id="GO:0140096">
    <property type="term" value="F:catalytic activity, acting on a protein"/>
    <property type="evidence" value="ECO:0007669"/>
    <property type="project" value="UniProtKB-ARBA"/>
</dbReference>
<dbReference type="GO" id="GO:0000287">
    <property type="term" value="F:magnesium ion binding"/>
    <property type="evidence" value="ECO:0007669"/>
    <property type="project" value="UniProtKB-UniRule"/>
</dbReference>
<dbReference type="GO" id="GO:0004826">
    <property type="term" value="F:phenylalanine-tRNA ligase activity"/>
    <property type="evidence" value="ECO:0007669"/>
    <property type="project" value="UniProtKB-UniRule"/>
</dbReference>
<dbReference type="GO" id="GO:0016740">
    <property type="term" value="F:transferase activity"/>
    <property type="evidence" value="ECO:0007669"/>
    <property type="project" value="UniProtKB-ARBA"/>
</dbReference>
<dbReference type="GO" id="GO:0000049">
    <property type="term" value="F:tRNA binding"/>
    <property type="evidence" value="ECO:0007669"/>
    <property type="project" value="InterPro"/>
</dbReference>
<dbReference type="GO" id="GO:0006432">
    <property type="term" value="P:phenylalanyl-tRNA aminoacylation"/>
    <property type="evidence" value="ECO:0007669"/>
    <property type="project" value="UniProtKB-UniRule"/>
</dbReference>
<dbReference type="CDD" id="cd00496">
    <property type="entry name" value="PheRS_alpha_core"/>
    <property type="match status" value="1"/>
</dbReference>
<dbReference type="FunFam" id="3.30.930.10:FF:000003">
    <property type="entry name" value="Phenylalanine--tRNA ligase alpha subunit"/>
    <property type="match status" value="1"/>
</dbReference>
<dbReference type="Gene3D" id="3.30.930.10">
    <property type="entry name" value="Bira Bifunctional Protein, Domain 2"/>
    <property type="match status" value="1"/>
</dbReference>
<dbReference type="HAMAP" id="MF_00281">
    <property type="entry name" value="Phe_tRNA_synth_alpha1"/>
    <property type="match status" value="1"/>
</dbReference>
<dbReference type="InterPro" id="IPR006195">
    <property type="entry name" value="aa-tRNA-synth_II"/>
</dbReference>
<dbReference type="InterPro" id="IPR045864">
    <property type="entry name" value="aa-tRNA-synth_II/BPL/LPL"/>
</dbReference>
<dbReference type="InterPro" id="IPR004529">
    <property type="entry name" value="Phe-tRNA-synth_IIc_asu"/>
</dbReference>
<dbReference type="InterPro" id="IPR004188">
    <property type="entry name" value="Phe-tRNA_ligase_II_N"/>
</dbReference>
<dbReference type="InterPro" id="IPR022911">
    <property type="entry name" value="Phe_tRNA_ligase_alpha1_bac"/>
</dbReference>
<dbReference type="InterPro" id="IPR002319">
    <property type="entry name" value="Phenylalanyl-tRNA_Synthase"/>
</dbReference>
<dbReference type="InterPro" id="IPR010978">
    <property type="entry name" value="tRNA-bd_arm"/>
</dbReference>
<dbReference type="NCBIfam" id="TIGR00468">
    <property type="entry name" value="pheS"/>
    <property type="match status" value="1"/>
</dbReference>
<dbReference type="PANTHER" id="PTHR11538:SF41">
    <property type="entry name" value="PHENYLALANINE--TRNA LIGASE, MITOCHONDRIAL"/>
    <property type="match status" value="1"/>
</dbReference>
<dbReference type="PANTHER" id="PTHR11538">
    <property type="entry name" value="PHENYLALANYL-TRNA SYNTHETASE"/>
    <property type="match status" value="1"/>
</dbReference>
<dbReference type="Pfam" id="PF02912">
    <property type="entry name" value="Phe_tRNA-synt_N"/>
    <property type="match status" value="1"/>
</dbReference>
<dbReference type="Pfam" id="PF01409">
    <property type="entry name" value="tRNA-synt_2d"/>
    <property type="match status" value="1"/>
</dbReference>
<dbReference type="SUPFAM" id="SSF55681">
    <property type="entry name" value="Class II aaRS and biotin synthetases"/>
    <property type="match status" value="1"/>
</dbReference>
<dbReference type="SUPFAM" id="SSF46589">
    <property type="entry name" value="tRNA-binding arm"/>
    <property type="match status" value="1"/>
</dbReference>
<dbReference type="PROSITE" id="PS50862">
    <property type="entry name" value="AA_TRNA_LIGASE_II"/>
    <property type="match status" value="1"/>
</dbReference>
<evidence type="ECO:0000255" key="1">
    <source>
        <dbReference type="HAMAP-Rule" id="MF_00281"/>
    </source>
</evidence>
<feature type="chain" id="PRO_0000231994" description="Phenylalanine--tRNA ligase alpha subunit">
    <location>
        <begin position="1"/>
        <end position="340"/>
    </location>
</feature>
<feature type="binding site" evidence="1">
    <location>
        <position position="255"/>
    </location>
    <ligand>
        <name>Mg(2+)</name>
        <dbReference type="ChEBI" id="CHEBI:18420"/>
        <note>shared with beta subunit</note>
    </ligand>
</feature>
<keyword id="KW-0030">Aminoacyl-tRNA synthetase</keyword>
<keyword id="KW-0067">ATP-binding</keyword>
<keyword id="KW-0963">Cytoplasm</keyword>
<keyword id="KW-0436">Ligase</keyword>
<keyword id="KW-0460">Magnesium</keyword>
<keyword id="KW-0479">Metal-binding</keyword>
<keyword id="KW-0547">Nucleotide-binding</keyword>
<keyword id="KW-0648">Protein biosynthesis</keyword>